<organism>
    <name type="scientific">Pyrobaculum aerophilum (strain ATCC 51768 / DSM 7523 / JCM 9630 / CIP 104966 / NBRC 100827 / IM2)</name>
    <dbReference type="NCBI Taxonomy" id="178306"/>
    <lineage>
        <taxon>Archaea</taxon>
        <taxon>Thermoproteota</taxon>
        <taxon>Thermoprotei</taxon>
        <taxon>Thermoproteales</taxon>
        <taxon>Thermoproteaceae</taxon>
        <taxon>Pyrobaculum</taxon>
    </lineage>
</organism>
<name>RS19_PYRAE</name>
<evidence type="ECO:0000255" key="1">
    <source>
        <dbReference type="HAMAP-Rule" id="MF_00531"/>
    </source>
</evidence>
<evidence type="ECO:0000305" key="2"/>
<feature type="chain" id="PRO_0000130010" description="Small ribosomal subunit protein uS19">
    <location>
        <begin position="1"/>
        <end position="158"/>
    </location>
</feature>
<accession>Q8ZWL4</accession>
<gene>
    <name evidence="1" type="primary">rps19</name>
    <name type="ordered locus">PAE1729</name>
</gene>
<protein>
    <recommendedName>
        <fullName evidence="1">Small ribosomal subunit protein uS19</fullName>
    </recommendedName>
    <alternativeName>
        <fullName evidence="2">30S ribosomal protein S19</fullName>
    </alternativeName>
</protein>
<sequence length="158" mass="18160">MSSKEQEAQKGKQGWITPTVIPPEEWATFRYRGKTLEELLNMSMDEFIKLLPARQRRSLKRGLKPEHRKLLEKIRKAKRLAAQGKKVVIRTHCRDMIILPEMVGLTIHVYNGITYIPVFISPWHIGHYLGEFALTTKIVQHGEPGLKATRSSLHIAAK</sequence>
<proteinExistence type="inferred from homology"/>
<comment type="function">
    <text evidence="1">Protein S19 forms a complex with S13 that binds strongly to the 16S ribosomal RNA.</text>
</comment>
<comment type="similarity">
    <text evidence="1">Belongs to the universal ribosomal protein uS19 family.</text>
</comment>
<dbReference type="EMBL" id="AE009441">
    <property type="protein sequence ID" value="AAL63687.1"/>
    <property type="molecule type" value="Genomic_DNA"/>
</dbReference>
<dbReference type="RefSeq" id="WP_011008159.1">
    <property type="nucleotide sequence ID" value="NC_003364.1"/>
</dbReference>
<dbReference type="SMR" id="Q8ZWL4"/>
<dbReference type="FunCoup" id="Q8ZWL4">
    <property type="interactions" value="168"/>
</dbReference>
<dbReference type="STRING" id="178306.PAE1729"/>
<dbReference type="EnsemblBacteria" id="AAL63687">
    <property type="protein sequence ID" value="AAL63687"/>
    <property type="gene ID" value="PAE1729"/>
</dbReference>
<dbReference type="GeneID" id="1465937"/>
<dbReference type="KEGG" id="pai:PAE1729"/>
<dbReference type="PATRIC" id="fig|178306.9.peg.1279"/>
<dbReference type="eggNOG" id="arCOG04099">
    <property type="taxonomic scope" value="Archaea"/>
</dbReference>
<dbReference type="HOGENOM" id="CLU_097347_1_1_2"/>
<dbReference type="InParanoid" id="Q8ZWL4"/>
<dbReference type="Proteomes" id="UP000002439">
    <property type="component" value="Chromosome"/>
</dbReference>
<dbReference type="GO" id="GO:0022627">
    <property type="term" value="C:cytosolic small ribosomal subunit"/>
    <property type="evidence" value="ECO:0000318"/>
    <property type="project" value="GO_Central"/>
</dbReference>
<dbReference type="GO" id="GO:0019843">
    <property type="term" value="F:rRNA binding"/>
    <property type="evidence" value="ECO:0007669"/>
    <property type="project" value="UniProtKB-UniRule"/>
</dbReference>
<dbReference type="GO" id="GO:0003735">
    <property type="term" value="F:structural constituent of ribosome"/>
    <property type="evidence" value="ECO:0000318"/>
    <property type="project" value="GO_Central"/>
</dbReference>
<dbReference type="GO" id="GO:0000028">
    <property type="term" value="P:ribosomal small subunit assembly"/>
    <property type="evidence" value="ECO:0000318"/>
    <property type="project" value="GO_Central"/>
</dbReference>
<dbReference type="GO" id="GO:0006412">
    <property type="term" value="P:translation"/>
    <property type="evidence" value="ECO:0007669"/>
    <property type="project" value="UniProtKB-UniRule"/>
</dbReference>
<dbReference type="FunFam" id="3.30.860.10:FF:000002">
    <property type="entry name" value="40S ribosomal protein S15"/>
    <property type="match status" value="1"/>
</dbReference>
<dbReference type="Gene3D" id="3.30.860.10">
    <property type="entry name" value="30s Ribosomal Protein S19, Chain A"/>
    <property type="match status" value="1"/>
</dbReference>
<dbReference type="HAMAP" id="MF_00531">
    <property type="entry name" value="Ribosomal_uS19"/>
    <property type="match status" value="1"/>
</dbReference>
<dbReference type="InterPro" id="IPR002222">
    <property type="entry name" value="Ribosomal_uS19"/>
</dbReference>
<dbReference type="InterPro" id="IPR020934">
    <property type="entry name" value="Ribosomal_uS19_CS"/>
</dbReference>
<dbReference type="InterPro" id="IPR005713">
    <property type="entry name" value="Ribosomal_uS19_euk/arc"/>
</dbReference>
<dbReference type="InterPro" id="IPR023575">
    <property type="entry name" value="Ribosomal_uS19_SF"/>
</dbReference>
<dbReference type="NCBIfam" id="NF003121">
    <property type="entry name" value="PRK04038.1"/>
    <property type="match status" value="1"/>
</dbReference>
<dbReference type="NCBIfam" id="TIGR01025">
    <property type="entry name" value="uS19_arch"/>
    <property type="match status" value="1"/>
</dbReference>
<dbReference type="PANTHER" id="PTHR11880">
    <property type="entry name" value="RIBOSOMAL PROTEIN S19P FAMILY MEMBER"/>
    <property type="match status" value="1"/>
</dbReference>
<dbReference type="PANTHER" id="PTHR11880:SF2">
    <property type="entry name" value="SMALL RIBOSOMAL SUBUNIT PROTEIN US19"/>
    <property type="match status" value="1"/>
</dbReference>
<dbReference type="Pfam" id="PF00203">
    <property type="entry name" value="Ribosomal_S19"/>
    <property type="match status" value="1"/>
</dbReference>
<dbReference type="PIRSF" id="PIRSF002144">
    <property type="entry name" value="Ribosomal_S19"/>
    <property type="match status" value="1"/>
</dbReference>
<dbReference type="PRINTS" id="PR00975">
    <property type="entry name" value="RIBOSOMALS19"/>
</dbReference>
<dbReference type="SUPFAM" id="SSF54570">
    <property type="entry name" value="Ribosomal protein S19"/>
    <property type="match status" value="1"/>
</dbReference>
<dbReference type="PROSITE" id="PS00323">
    <property type="entry name" value="RIBOSOMAL_S19"/>
    <property type="match status" value="1"/>
</dbReference>
<reference key="1">
    <citation type="journal article" date="2002" name="Proc. Natl. Acad. Sci. U.S.A.">
        <title>Genome sequence of the hyperthermophilic crenarchaeon Pyrobaculum aerophilum.</title>
        <authorList>
            <person name="Fitz-Gibbon S.T."/>
            <person name="Ladner H."/>
            <person name="Kim U.-J."/>
            <person name="Stetter K.O."/>
            <person name="Simon M.I."/>
            <person name="Miller J.H."/>
        </authorList>
    </citation>
    <scope>NUCLEOTIDE SEQUENCE [LARGE SCALE GENOMIC DNA]</scope>
    <source>
        <strain>ATCC 51768 / DSM 7523 / JCM 9630 / CIP 104966 / NBRC 100827 / IM2</strain>
    </source>
</reference>
<keyword id="KW-1185">Reference proteome</keyword>
<keyword id="KW-0687">Ribonucleoprotein</keyword>
<keyword id="KW-0689">Ribosomal protein</keyword>
<keyword id="KW-0694">RNA-binding</keyword>
<keyword id="KW-0699">rRNA-binding</keyword>